<accession>P0ADE7</accession>
<accession>P39169</accession>
<accession>P76624</accession>
<accession>P77022</accession>
<accession>P77023</accession>
<proteinExistence type="inferred from homology"/>
<protein>
    <recommendedName>
        <fullName evidence="1">Potassium binding protein Kbp</fullName>
        <shortName evidence="1">K(+) binding protein Kbp</shortName>
    </recommendedName>
</protein>
<comment type="function">
    <text evidence="1">Highly specific potassium binding protein that is required for normal growth in the presence of high levels of external K(+). May act as a sensor of cytoplasmic K(+) concentration.</text>
</comment>
<comment type="subcellular location">
    <subcellularLocation>
        <location evidence="1">Cytoplasm</location>
    </subcellularLocation>
</comment>
<feature type="initiator methionine" description="Removed" evidence="1">
    <location>
        <position position="1"/>
    </location>
</feature>
<feature type="chain" id="PRO_0000169833" description="Potassium binding protein Kbp">
    <location>
        <begin position="2"/>
        <end position="149"/>
    </location>
</feature>
<feature type="domain" description="BON" evidence="2">
    <location>
        <begin position="23"/>
        <end position="91"/>
    </location>
</feature>
<feature type="domain" description="LysM" evidence="3">
    <location>
        <begin position="97"/>
        <end position="146"/>
    </location>
</feature>
<evidence type="ECO:0000250" key="1">
    <source>
        <dbReference type="UniProtKB" id="P0ADE6"/>
    </source>
</evidence>
<evidence type="ECO:0000255" key="2">
    <source>
        <dbReference type="PROSITE-ProRule" id="PRU00229"/>
    </source>
</evidence>
<evidence type="ECO:0000255" key="3">
    <source>
        <dbReference type="PROSITE-ProRule" id="PRU01118"/>
    </source>
</evidence>
<organism>
    <name type="scientific">Escherichia coli O6:H1 (strain CFT073 / ATCC 700928 / UPEC)</name>
    <dbReference type="NCBI Taxonomy" id="199310"/>
    <lineage>
        <taxon>Bacteria</taxon>
        <taxon>Pseudomonadati</taxon>
        <taxon>Pseudomonadota</taxon>
        <taxon>Gammaproteobacteria</taxon>
        <taxon>Enterobacterales</taxon>
        <taxon>Enterobacteriaceae</taxon>
        <taxon>Escherichia</taxon>
    </lineage>
</organism>
<dbReference type="EMBL" id="AE014075">
    <property type="protein sequence ID" value="AAN81665.1"/>
    <property type="molecule type" value="Genomic_DNA"/>
</dbReference>
<dbReference type="RefSeq" id="WP_000522415.1">
    <property type="nucleotide sequence ID" value="NZ_CP051263.1"/>
</dbReference>
<dbReference type="SMR" id="P0ADE7"/>
<dbReference type="STRING" id="199310.c3213"/>
<dbReference type="GeneID" id="75058518"/>
<dbReference type="KEGG" id="ecc:c3213"/>
<dbReference type="eggNOG" id="COG1652">
    <property type="taxonomic scope" value="Bacteria"/>
</dbReference>
<dbReference type="HOGENOM" id="CLU_125377_0_0_6"/>
<dbReference type="BioCyc" id="ECOL199310:C3213-MONOMER"/>
<dbReference type="Proteomes" id="UP000001410">
    <property type="component" value="Chromosome"/>
</dbReference>
<dbReference type="GO" id="GO:0005737">
    <property type="term" value="C:cytoplasm"/>
    <property type="evidence" value="ECO:0007669"/>
    <property type="project" value="UniProtKB-SubCell"/>
</dbReference>
<dbReference type="CDD" id="cd00118">
    <property type="entry name" value="LysM"/>
    <property type="match status" value="1"/>
</dbReference>
<dbReference type="FunFam" id="3.10.350.10:FF:000001">
    <property type="entry name" value="Peptidoglycan-binding protein LysM"/>
    <property type="match status" value="1"/>
</dbReference>
<dbReference type="Gene3D" id="3.10.350.10">
    <property type="entry name" value="LysM domain"/>
    <property type="match status" value="1"/>
</dbReference>
<dbReference type="InterPro" id="IPR052196">
    <property type="entry name" value="Bact_Kbp"/>
</dbReference>
<dbReference type="InterPro" id="IPR007055">
    <property type="entry name" value="BON_dom"/>
</dbReference>
<dbReference type="InterPro" id="IPR018392">
    <property type="entry name" value="LysM_dom"/>
</dbReference>
<dbReference type="InterPro" id="IPR036779">
    <property type="entry name" value="LysM_dom_sf"/>
</dbReference>
<dbReference type="InterPro" id="IPR014004">
    <property type="entry name" value="Transpt-assoc_nodulatn_dom_bac"/>
</dbReference>
<dbReference type="NCBIfam" id="NF008399">
    <property type="entry name" value="PRK11198.1"/>
    <property type="match status" value="1"/>
</dbReference>
<dbReference type="PANTHER" id="PTHR34700">
    <property type="entry name" value="POTASSIUM BINDING PROTEIN KBP"/>
    <property type="match status" value="1"/>
</dbReference>
<dbReference type="PANTHER" id="PTHR34700:SF8">
    <property type="entry name" value="POTASSIUM BINDING PROTEIN KBP"/>
    <property type="match status" value="1"/>
</dbReference>
<dbReference type="Pfam" id="PF04972">
    <property type="entry name" value="BON"/>
    <property type="match status" value="1"/>
</dbReference>
<dbReference type="Pfam" id="PF01476">
    <property type="entry name" value="LysM"/>
    <property type="match status" value="1"/>
</dbReference>
<dbReference type="SMART" id="SM00749">
    <property type="entry name" value="BON"/>
    <property type="match status" value="1"/>
</dbReference>
<dbReference type="SMART" id="SM00257">
    <property type="entry name" value="LysM"/>
    <property type="match status" value="1"/>
</dbReference>
<dbReference type="SUPFAM" id="SSF54106">
    <property type="entry name" value="LysM domain"/>
    <property type="match status" value="1"/>
</dbReference>
<dbReference type="PROSITE" id="PS50914">
    <property type="entry name" value="BON"/>
    <property type="match status" value="1"/>
</dbReference>
<dbReference type="PROSITE" id="PS51782">
    <property type="entry name" value="LYSM"/>
    <property type="match status" value="1"/>
</dbReference>
<gene>
    <name evidence="1" type="primary">kbp</name>
    <name type="synonym">ygaU</name>
    <name type="ordered locus">c3213</name>
</gene>
<name>KBP_ECOL6</name>
<keyword id="KW-0963">Cytoplasm</keyword>
<keyword id="KW-0630">Potassium</keyword>
<keyword id="KW-1185">Reference proteome</keyword>
<reference key="1">
    <citation type="journal article" date="2002" name="Proc. Natl. Acad. Sci. U.S.A.">
        <title>Extensive mosaic structure revealed by the complete genome sequence of uropathogenic Escherichia coli.</title>
        <authorList>
            <person name="Welch R.A."/>
            <person name="Burland V."/>
            <person name="Plunkett G. III"/>
            <person name="Redford P."/>
            <person name="Roesch P."/>
            <person name="Rasko D."/>
            <person name="Buckles E.L."/>
            <person name="Liou S.-R."/>
            <person name="Boutin A."/>
            <person name="Hackett J."/>
            <person name="Stroud D."/>
            <person name="Mayhew G.F."/>
            <person name="Rose D.J."/>
            <person name="Zhou S."/>
            <person name="Schwartz D.C."/>
            <person name="Perna N.T."/>
            <person name="Mobley H.L.T."/>
            <person name="Donnenberg M.S."/>
            <person name="Blattner F.R."/>
        </authorList>
    </citation>
    <scope>NUCLEOTIDE SEQUENCE [LARGE SCALE GENOMIC DNA]</scope>
    <source>
        <strain>CFT073 / ATCC 700928 / UPEC</strain>
    </source>
</reference>
<sequence>MGLFNFVKDAGEKLWDAVTGQHDKDDQAKKVQEHLNKTGIPDADKVNIQIADGKATVTGDGLSQEAKEKILVAVGNISGIASVDDQVKTATPATASQFYTVKSGDTLSAISKQVYGNANLYNKIFEANKPMLKSPDKIYPGQVLRIPEE</sequence>